<protein>
    <recommendedName>
        <fullName evidence="1">Glycine--tRNA ligase alpha subunit</fullName>
        <ecNumber evidence="1">6.1.1.14</ecNumber>
    </recommendedName>
    <alternativeName>
        <fullName evidence="1">Glycyl-tRNA synthetase alpha subunit</fullName>
        <shortName evidence="1">GlyRS</shortName>
    </alternativeName>
</protein>
<accession>Q3IDE6</accession>
<dbReference type="EC" id="6.1.1.14" evidence="1"/>
<dbReference type="EMBL" id="CR954246">
    <property type="protein sequence ID" value="CAI85119.1"/>
    <property type="molecule type" value="Genomic_DNA"/>
</dbReference>
<dbReference type="SMR" id="Q3IDE6"/>
<dbReference type="STRING" id="326442.PSHAa0005"/>
<dbReference type="KEGG" id="pha:PSHAa0005"/>
<dbReference type="eggNOG" id="COG0752">
    <property type="taxonomic scope" value="Bacteria"/>
</dbReference>
<dbReference type="HOGENOM" id="CLU_057066_1_0_6"/>
<dbReference type="BioCyc" id="PHAL326442:PSHA_RS00025-MONOMER"/>
<dbReference type="Proteomes" id="UP000006843">
    <property type="component" value="Chromosome I"/>
</dbReference>
<dbReference type="GO" id="GO:0005829">
    <property type="term" value="C:cytosol"/>
    <property type="evidence" value="ECO:0007669"/>
    <property type="project" value="TreeGrafter"/>
</dbReference>
<dbReference type="GO" id="GO:0005524">
    <property type="term" value="F:ATP binding"/>
    <property type="evidence" value="ECO:0007669"/>
    <property type="project" value="UniProtKB-UniRule"/>
</dbReference>
<dbReference type="GO" id="GO:0004820">
    <property type="term" value="F:glycine-tRNA ligase activity"/>
    <property type="evidence" value="ECO:0007669"/>
    <property type="project" value="UniProtKB-UniRule"/>
</dbReference>
<dbReference type="GO" id="GO:0006426">
    <property type="term" value="P:glycyl-tRNA aminoacylation"/>
    <property type="evidence" value="ECO:0007669"/>
    <property type="project" value="UniProtKB-UniRule"/>
</dbReference>
<dbReference type="CDD" id="cd00733">
    <property type="entry name" value="GlyRS_alpha_core"/>
    <property type="match status" value="1"/>
</dbReference>
<dbReference type="FunFam" id="3.30.930.10:FF:000006">
    <property type="entry name" value="Glycine--tRNA ligase alpha subunit"/>
    <property type="match status" value="1"/>
</dbReference>
<dbReference type="Gene3D" id="3.30.930.10">
    <property type="entry name" value="Bira Bifunctional Protein, Domain 2"/>
    <property type="match status" value="1"/>
</dbReference>
<dbReference type="Gene3D" id="1.20.58.180">
    <property type="entry name" value="Class II aaRS and biotin synthetases, domain 2"/>
    <property type="match status" value="1"/>
</dbReference>
<dbReference type="HAMAP" id="MF_00254">
    <property type="entry name" value="Gly_tRNA_synth_alpha"/>
    <property type="match status" value="1"/>
</dbReference>
<dbReference type="InterPro" id="IPR045864">
    <property type="entry name" value="aa-tRNA-synth_II/BPL/LPL"/>
</dbReference>
<dbReference type="InterPro" id="IPR006194">
    <property type="entry name" value="Gly-tRNA-synth_heterodimer"/>
</dbReference>
<dbReference type="InterPro" id="IPR002310">
    <property type="entry name" value="Gly-tRNA_ligase_asu"/>
</dbReference>
<dbReference type="NCBIfam" id="TIGR00388">
    <property type="entry name" value="glyQ"/>
    <property type="match status" value="1"/>
</dbReference>
<dbReference type="NCBIfam" id="NF006827">
    <property type="entry name" value="PRK09348.1"/>
    <property type="match status" value="1"/>
</dbReference>
<dbReference type="PANTHER" id="PTHR30075:SF2">
    <property type="entry name" value="GLYCINE--TRNA LIGASE, CHLOROPLASTIC_MITOCHONDRIAL 2"/>
    <property type="match status" value="1"/>
</dbReference>
<dbReference type="PANTHER" id="PTHR30075">
    <property type="entry name" value="GLYCYL-TRNA SYNTHETASE"/>
    <property type="match status" value="1"/>
</dbReference>
<dbReference type="Pfam" id="PF02091">
    <property type="entry name" value="tRNA-synt_2e"/>
    <property type="match status" value="1"/>
</dbReference>
<dbReference type="PRINTS" id="PR01044">
    <property type="entry name" value="TRNASYNTHGA"/>
</dbReference>
<dbReference type="SUPFAM" id="SSF55681">
    <property type="entry name" value="Class II aaRS and biotin synthetases"/>
    <property type="match status" value="1"/>
</dbReference>
<dbReference type="PROSITE" id="PS50861">
    <property type="entry name" value="AA_TRNA_LIGASE_II_GLYAB"/>
    <property type="match status" value="1"/>
</dbReference>
<evidence type="ECO:0000255" key="1">
    <source>
        <dbReference type="HAMAP-Rule" id="MF_00254"/>
    </source>
</evidence>
<gene>
    <name evidence="1" type="primary">glyQ</name>
    <name type="ordered locus">PSHAa0005</name>
</gene>
<keyword id="KW-0030">Aminoacyl-tRNA synthetase</keyword>
<keyword id="KW-0067">ATP-binding</keyword>
<keyword id="KW-0963">Cytoplasm</keyword>
<keyword id="KW-0436">Ligase</keyword>
<keyword id="KW-0547">Nucleotide-binding</keyword>
<keyword id="KW-0648">Protein biosynthesis</keyword>
<keyword id="KW-1185">Reference proteome</keyword>
<feature type="chain" id="PRO_1000047471" description="Glycine--tRNA ligase alpha subunit">
    <location>
        <begin position="1"/>
        <end position="300"/>
    </location>
</feature>
<sequence>MQKYDVKTFQGLILALQDYWAQQGCVIIQPLDMEVGAGTFHPQTFLKSIGPEPMSSAYVQPCRRPTDGRYGENPNRLQHYYQFQVVLKPSPDNIQELYLGSLAAVGIDTLTDEVRFVEDNWESPTLGAWGLGWEIWLNGMEVTQFTYFQQVGGIECSPVTGEITYGLERLAMYIQGVDSIYDLVWADGPLGRVTYGDVFHQNEVEQSTYNFEHANVEDLFAQFDKCEAESQKLIEANLPLPAYEQVMKASHAFNLLDARHAISVTERQRYILRVRALSKACAQSYYDKREALGFPLCKDK</sequence>
<comment type="catalytic activity">
    <reaction evidence="1">
        <text>tRNA(Gly) + glycine + ATP = glycyl-tRNA(Gly) + AMP + diphosphate</text>
        <dbReference type="Rhea" id="RHEA:16013"/>
        <dbReference type="Rhea" id="RHEA-COMP:9664"/>
        <dbReference type="Rhea" id="RHEA-COMP:9683"/>
        <dbReference type="ChEBI" id="CHEBI:30616"/>
        <dbReference type="ChEBI" id="CHEBI:33019"/>
        <dbReference type="ChEBI" id="CHEBI:57305"/>
        <dbReference type="ChEBI" id="CHEBI:78442"/>
        <dbReference type="ChEBI" id="CHEBI:78522"/>
        <dbReference type="ChEBI" id="CHEBI:456215"/>
        <dbReference type="EC" id="6.1.1.14"/>
    </reaction>
</comment>
<comment type="subunit">
    <text evidence="1">Tetramer of two alpha and two beta subunits.</text>
</comment>
<comment type="subcellular location">
    <subcellularLocation>
        <location evidence="1">Cytoplasm</location>
    </subcellularLocation>
</comment>
<comment type="similarity">
    <text evidence="1">Belongs to the class-II aminoacyl-tRNA synthetase family.</text>
</comment>
<organism>
    <name type="scientific">Pseudoalteromonas translucida (strain TAC 125)</name>
    <dbReference type="NCBI Taxonomy" id="326442"/>
    <lineage>
        <taxon>Bacteria</taxon>
        <taxon>Pseudomonadati</taxon>
        <taxon>Pseudomonadota</taxon>
        <taxon>Gammaproteobacteria</taxon>
        <taxon>Alteromonadales</taxon>
        <taxon>Pseudoalteromonadaceae</taxon>
        <taxon>Pseudoalteromonas</taxon>
    </lineage>
</organism>
<reference key="1">
    <citation type="journal article" date="2005" name="Genome Res.">
        <title>Coping with cold: the genome of the versatile marine Antarctica bacterium Pseudoalteromonas haloplanktis TAC125.</title>
        <authorList>
            <person name="Medigue C."/>
            <person name="Krin E."/>
            <person name="Pascal G."/>
            <person name="Barbe V."/>
            <person name="Bernsel A."/>
            <person name="Bertin P.N."/>
            <person name="Cheung F."/>
            <person name="Cruveiller S."/>
            <person name="D'Amico S."/>
            <person name="Duilio A."/>
            <person name="Fang G."/>
            <person name="Feller G."/>
            <person name="Ho C."/>
            <person name="Mangenot S."/>
            <person name="Marino G."/>
            <person name="Nilsson J."/>
            <person name="Parrilli E."/>
            <person name="Rocha E.P.C."/>
            <person name="Rouy Z."/>
            <person name="Sekowska A."/>
            <person name="Tutino M.L."/>
            <person name="Vallenet D."/>
            <person name="von Heijne G."/>
            <person name="Danchin A."/>
        </authorList>
    </citation>
    <scope>NUCLEOTIDE SEQUENCE [LARGE SCALE GENOMIC DNA]</scope>
    <source>
        <strain>TAC 125</strain>
    </source>
</reference>
<name>SYGA_PSET1</name>
<proteinExistence type="inferred from homology"/>